<sequence length="247" mass="26433">MSITAQSVYRDTGNFFRNQFMTILLVSLLCAFITVVLGHVFSPSDAQLAQLNDGVPVSGSSGLFDLVQNMSPEQQQILLQASAASTFSGLIGNAILAGGVILIIQLVSAGQRVSALRAIGASAPILPKLFILIFLTTLLVQIGIMLVVVPGIIMAILLALAPVMLVQDKMGIFASMRSSMRLTWANMRLVAPAVLSWLLAKTLLLLFASSFAALTPEIGAVLANTLSNLISAILLIYLFRLYMLIRQ</sequence>
<comment type="subcellular location">
    <subcellularLocation>
        <location evidence="1">Cell inner membrane</location>
        <topology evidence="1">Multi-pass membrane protein</topology>
    </subcellularLocation>
</comment>
<comment type="similarity">
    <text evidence="1">Belongs to the UPF0259 family.</text>
</comment>
<name>YCIC_SHISS</name>
<proteinExistence type="inferred from homology"/>
<keyword id="KW-0997">Cell inner membrane</keyword>
<keyword id="KW-1003">Cell membrane</keyword>
<keyword id="KW-0472">Membrane</keyword>
<keyword id="KW-1185">Reference proteome</keyword>
<keyword id="KW-0812">Transmembrane</keyword>
<keyword id="KW-1133">Transmembrane helix</keyword>
<organism>
    <name type="scientific">Shigella sonnei (strain Ss046)</name>
    <dbReference type="NCBI Taxonomy" id="300269"/>
    <lineage>
        <taxon>Bacteria</taxon>
        <taxon>Pseudomonadati</taxon>
        <taxon>Pseudomonadota</taxon>
        <taxon>Gammaproteobacteria</taxon>
        <taxon>Enterobacterales</taxon>
        <taxon>Enterobacteriaceae</taxon>
        <taxon>Shigella</taxon>
    </lineage>
</organism>
<accession>Q3Z0Y3</accession>
<dbReference type="EMBL" id="CP000038">
    <property type="protein sequence ID" value="AAZ88579.1"/>
    <property type="molecule type" value="Genomic_DNA"/>
</dbReference>
<dbReference type="RefSeq" id="WP_000028540.1">
    <property type="nucleotide sequence ID" value="NC_007384.1"/>
</dbReference>
<dbReference type="KEGG" id="ssn:SSON_1911"/>
<dbReference type="HOGENOM" id="CLU_073287_0_0_6"/>
<dbReference type="Proteomes" id="UP000002529">
    <property type="component" value="Chromosome"/>
</dbReference>
<dbReference type="GO" id="GO:0005886">
    <property type="term" value="C:plasma membrane"/>
    <property type="evidence" value="ECO:0007669"/>
    <property type="project" value="UniProtKB-SubCell"/>
</dbReference>
<dbReference type="HAMAP" id="MF_01067">
    <property type="entry name" value="UPF0259"/>
    <property type="match status" value="1"/>
</dbReference>
<dbReference type="InterPro" id="IPR009627">
    <property type="entry name" value="UPF0259"/>
</dbReference>
<dbReference type="NCBIfam" id="NF002774">
    <property type="entry name" value="PRK02868.1"/>
    <property type="match status" value="1"/>
</dbReference>
<dbReference type="Pfam" id="PF06790">
    <property type="entry name" value="UPF0259"/>
    <property type="match status" value="1"/>
</dbReference>
<reference key="1">
    <citation type="journal article" date="2005" name="Nucleic Acids Res.">
        <title>Genome dynamics and diversity of Shigella species, the etiologic agents of bacillary dysentery.</title>
        <authorList>
            <person name="Yang F."/>
            <person name="Yang J."/>
            <person name="Zhang X."/>
            <person name="Chen L."/>
            <person name="Jiang Y."/>
            <person name="Yan Y."/>
            <person name="Tang X."/>
            <person name="Wang J."/>
            <person name="Xiong Z."/>
            <person name="Dong J."/>
            <person name="Xue Y."/>
            <person name="Zhu Y."/>
            <person name="Xu X."/>
            <person name="Sun L."/>
            <person name="Chen S."/>
            <person name="Nie H."/>
            <person name="Peng J."/>
            <person name="Xu J."/>
            <person name="Wang Y."/>
            <person name="Yuan Z."/>
            <person name="Wen Y."/>
            <person name="Yao Z."/>
            <person name="Shen Y."/>
            <person name="Qiang B."/>
            <person name="Hou Y."/>
            <person name="Yu J."/>
            <person name="Jin Q."/>
        </authorList>
    </citation>
    <scope>NUCLEOTIDE SEQUENCE [LARGE SCALE GENOMIC DNA]</scope>
    <source>
        <strain>Ss046</strain>
    </source>
</reference>
<gene>
    <name evidence="1" type="primary">yciC</name>
    <name type="ordered locus">SSON_1911</name>
</gene>
<feature type="chain" id="PRO_1000064535" description="UPF0259 membrane protein YciC">
    <location>
        <begin position="1"/>
        <end position="247"/>
    </location>
</feature>
<feature type="transmembrane region" description="Helical" evidence="1">
    <location>
        <begin position="20"/>
        <end position="40"/>
    </location>
</feature>
<feature type="transmembrane region" description="Helical" evidence="1">
    <location>
        <begin position="87"/>
        <end position="107"/>
    </location>
</feature>
<feature type="transmembrane region" description="Helical" evidence="1">
    <location>
        <begin position="118"/>
        <end position="140"/>
    </location>
</feature>
<feature type="transmembrane region" description="Helical" evidence="1">
    <location>
        <begin position="152"/>
        <end position="172"/>
    </location>
</feature>
<feature type="transmembrane region" description="Helical" evidence="1">
    <location>
        <begin position="187"/>
        <end position="209"/>
    </location>
</feature>
<feature type="transmembrane region" description="Helical" evidence="1">
    <location>
        <begin position="225"/>
        <end position="245"/>
    </location>
</feature>
<evidence type="ECO:0000255" key="1">
    <source>
        <dbReference type="HAMAP-Rule" id="MF_01067"/>
    </source>
</evidence>
<protein>
    <recommendedName>
        <fullName evidence="1">UPF0259 membrane protein YciC</fullName>
    </recommendedName>
</protein>